<gene>
    <name evidence="1" type="primary">hisB</name>
    <name type="ordered locus">Cj1599</name>
</gene>
<comment type="catalytic activity">
    <reaction evidence="1">
        <text>D-erythro-1-(imidazol-4-yl)glycerol 3-phosphate = 3-(imidazol-4-yl)-2-oxopropyl phosphate + H2O</text>
        <dbReference type="Rhea" id="RHEA:11040"/>
        <dbReference type="ChEBI" id="CHEBI:15377"/>
        <dbReference type="ChEBI" id="CHEBI:57766"/>
        <dbReference type="ChEBI" id="CHEBI:58278"/>
        <dbReference type="EC" id="4.2.1.19"/>
    </reaction>
</comment>
<comment type="catalytic activity">
    <reaction evidence="1">
        <text>L-histidinol phosphate + H2O = L-histidinol + phosphate</text>
        <dbReference type="Rhea" id="RHEA:14465"/>
        <dbReference type="ChEBI" id="CHEBI:15377"/>
        <dbReference type="ChEBI" id="CHEBI:43474"/>
        <dbReference type="ChEBI" id="CHEBI:57699"/>
        <dbReference type="ChEBI" id="CHEBI:57980"/>
        <dbReference type="EC" id="3.1.3.15"/>
    </reaction>
</comment>
<comment type="cofactor">
    <cofactor evidence="1">
        <name>Mg(2+)</name>
        <dbReference type="ChEBI" id="CHEBI:18420"/>
    </cofactor>
</comment>
<comment type="cofactor">
    <cofactor evidence="1">
        <name>Zn(2+)</name>
        <dbReference type="ChEBI" id="CHEBI:29105"/>
    </cofactor>
</comment>
<comment type="pathway">
    <text evidence="1">Amino-acid biosynthesis; L-histidine biosynthesis; L-histidine from 5-phospho-alpha-D-ribose 1-diphosphate: step 6/9.</text>
</comment>
<comment type="pathway">
    <text evidence="1">Amino-acid biosynthesis; L-histidine biosynthesis; L-histidine from 5-phospho-alpha-D-ribose 1-diphosphate: step 8/9.</text>
</comment>
<comment type="subcellular location">
    <subcellularLocation>
        <location evidence="1">Cytoplasm</location>
    </subcellularLocation>
</comment>
<comment type="similarity">
    <text evidence="1">In the N-terminal section; belongs to the histidinol-phosphatase family.</text>
</comment>
<comment type="similarity">
    <text evidence="1">In the C-terminal section; belongs to the imidazoleglycerol-phosphate dehydratase family.</text>
</comment>
<keyword id="KW-0028">Amino-acid biosynthesis</keyword>
<keyword id="KW-0963">Cytoplasm</keyword>
<keyword id="KW-0368">Histidine biosynthesis</keyword>
<keyword id="KW-0378">Hydrolase</keyword>
<keyword id="KW-0456">Lyase</keyword>
<keyword id="KW-0460">Magnesium</keyword>
<keyword id="KW-0479">Metal-binding</keyword>
<keyword id="KW-0511">Multifunctional enzyme</keyword>
<keyword id="KW-1185">Reference proteome</keyword>
<keyword id="KW-0862">Zinc</keyword>
<protein>
    <recommendedName>
        <fullName evidence="1">Histidine biosynthesis bifunctional protein HisB</fullName>
    </recommendedName>
    <domain>
        <recommendedName>
            <fullName evidence="1">Histidinol-phosphatase</fullName>
            <ecNumber evidence="1">3.1.3.15</ecNumber>
        </recommendedName>
    </domain>
    <domain>
        <recommendedName>
            <fullName evidence="1">Imidazoleglycerol-phosphate dehydratase</fullName>
            <shortName evidence="1">IGPD</shortName>
            <ecNumber evidence="1">4.2.1.19</ecNumber>
        </recommendedName>
    </domain>
</protein>
<name>HIS7_CAMJE</name>
<organism>
    <name type="scientific">Campylobacter jejuni subsp. jejuni serotype O:2 (strain ATCC 700819 / NCTC 11168)</name>
    <dbReference type="NCBI Taxonomy" id="192222"/>
    <lineage>
        <taxon>Bacteria</taxon>
        <taxon>Pseudomonadati</taxon>
        <taxon>Campylobacterota</taxon>
        <taxon>Epsilonproteobacteria</taxon>
        <taxon>Campylobacterales</taxon>
        <taxon>Campylobacteraceae</taxon>
        <taxon>Campylobacter</taxon>
    </lineage>
</organism>
<sequence>MSQKILFIDRDGTLIEEPKSDFQIDTLEKLRFEKDAIPTLLKLKKFGFKFVMVSNQDGLGTPSFPKENFEIAHEKMLDILKSCGIEFQDIFICPHFENENCACRKPKTAMLEEYIKHELYDKEQSFVIGDRESDMILASNLGVRGLKYGELSWKEIENEILSSFRSASYQRTTKETDIKVKVCLNGGKVSIKTGIDFFDHMLEQIAVHGGIGLEISCKGDLEIDEHHSVEDVALALGACIKKALGDKIGIARYGFALPMDECLASCAMDFCNRPHLVYKAKFKKSHLGALSTEMIEHFFYSLSYAMGVSLHLKVKGKNDHHKAEGLFKAFAKALKMAVKIESENLASSKGVI</sequence>
<accession>Q9PM76</accession>
<accession>Q0P829</accession>
<dbReference type="EC" id="3.1.3.15" evidence="1"/>
<dbReference type="EC" id="4.2.1.19" evidence="1"/>
<dbReference type="EMBL" id="AL111168">
    <property type="protein sequence ID" value="CAL35696.1"/>
    <property type="molecule type" value="Genomic_DNA"/>
</dbReference>
<dbReference type="PIR" id="E81255">
    <property type="entry name" value="E81255"/>
</dbReference>
<dbReference type="RefSeq" id="WP_002858024.1">
    <property type="nucleotide sequence ID" value="NZ_SZUC01000002.1"/>
</dbReference>
<dbReference type="RefSeq" id="YP_002344968.1">
    <property type="nucleotide sequence ID" value="NC_002163.1"/>
</dbReference>
<dbReference type="SMR" id="Q9PM76"/>
<dbReference type="IntAct" id="Q9PM76">
    <property type="interactions" value="30"/>
</dbReference>
<dbReference type="STRING" id="192222.Cj1599"/>
<dbReference type="PaxDb" id="192222-Cj1599"/>
<dbReference type="EnsemblBacteria" id="CAL35696">
    <property type="protein sequence ID" value="CAL35696"/>
    <property type="gene ID" value="Cj1599"/>
</dbReference>
<dbReference type="GeneID" id="905869"/>
<dbReference type="KEGG" id="cje:Cj1599"/>
<dbReference type="PATRIC" id="fig|192222.6.peg.1575"/>
<dbReference type="eggNOG" id="COG0131">
    <property type="taxonomic scope" value="Bacteria"/>
</dbReference>
<dbReference type="eggNOG" id="COG0241">
    <property type="taxonomic scope" value="Bacteria"/>
</dbReference>
<dbReference type="HOGENOM" id="CLU_044308_0_0_7"/>
<dbReference type="OrthoDB" id="9790411at2"/>
<dbReference type="UniPathway" id="UPA00031">
    <property type="reaction ID" value="UER00011"/>
</dbReference>
<dbReference type="UniPathway" id="UPA00031">
    <property type="reaction ID" value="UER00013"/>
</dbReference>
<dbReference type="Proteomes" id="UP000000799">
    <property type="component" value="Chromosome"/>
</dbReference>
<dbReference type="GO" id="GO:0005737">
    <property type="term" value="C:cytoplasm"/>
    <property type="evidence" value="ECO:0007669"/>
    <property type="project" value="UniProtKB-SubCell"/>
</dbReference>
<dbReference type="GO" id="GO:0004401">
    <property type="term" value="F:histidinol-phosphatase activity"/>
    <property type="evidence" value="ECO:0007669"/>
    <property type="project" value="UniProtKB-UniRule"/>
</dbReference>
<dbReference type="GO" id="GO:0004424">
    <property type="term" value="F:imidazoleglycerol-phosphate dehydratase activity"/>
    <property type="evidence" value="ECO:0007669"/>
    <property type="project" value="UniProtKB-UniRule"/>
</dbReference>
<dbReference type="GO" id="GO:0046872">
    <property type="term" value="F:metal ion binding"/>
    <property type="evidence" value="ECO:0007669"/>
    <property type="project" value="UniProtKB-KW"/>
</dbReference>
<dbReference type="GO" id="GO:0000105">
    <property type="term" value="P:L-histidine biosynthetic process"/>
    <property type="evidence" value="ECO:0007669"/>
    <property type="project" value="UniProtKB-UniRule"/>
</dbReference>
<dbReference type="CDD" id="cd07503">
    <property type="entry name" value="HAD_HisB-N"/>
    <property type="match status" value="1"/>
</dbReference>
<dbReference type="CDD" id="cd07914">
    <property type="entry name" value="IGPD"/>
    <property type="match status" value="1"/>
</dbReference>
<dbReference type="FunFam" id="3.40.50.1000:FF:000061">
    <property type="entry name" value="Histidine biosynthesis bifunctional protein HisB"/>
    <property type="match status" value="1"/>
</dbReference>
<dbReference type="FunFam" id="3.30.230.40:FF:000001">
    <property type="entry name" value="Imidazoleglycerol-phosphate dehydratase HisB"/>
    <property type="match status" value="1"/>
</dbReference>
<dbReference type="FunFam" id="3.30.230.40:FF:000003">
    <property type="entry name" value="Imidazoleglycerol-phosphate dehydratase HisB"/>
    <property type="match status" value="1"/>
</dbReference>
<dbReference type="Gene3D" id="3.40.50.1000">
    <property type="entry name" value="HAD superfamily/HAD-like"/>
    <property type="match status" value="1"/>
</dbReference>
<dbReference type="Gene3D" id="3.30.230.40">
    <property type="entry name" value="Imidazole glycerol phosphate dehydratase, domain 1"/>
    <property type="match status" value="2"/>
</dbReference>
<dbReference type="HAMAP" id="MF_01022">
    <property type="entry name" value="Bifunc_HisB"/>
    <property type="match status" value="1"/>
</dbReference>
<dbReference type="HAMAP" id="MF_00076">
    <property type="entry name" value="HisB"/>
    <property type="match status" value="1"/>
</dbReference>
<dbReference type="InterPro" id="IPR036412">
    <property type="entry name" value="HAD-like_sf"/>
</dbReference>
<dbReference type="InterPro" id="IPR006549">
    <property type="entry name" value="HAD-SF_hydro_IIIA"/>
</dbReference>
<dbReference type="InterPro" id="IPR023214">
    <property type="entry name" value="HAD_sf"/>
</dbReference>
<dbReference type="InterPro" id="IPR020566">
    <property type="entry name" value="His_synth_bifunc_HisB"/>
</dbReference>
<dbReference type="InterPro" id="IPR005954">
    <property type="entry name" value="HisB_N"/>
</dbReference>
<dbReference type="InterPro" id="IPR006543">
    <property type="entry name" value="Histidinol-phos"/>
</dbReference>
<dbReference type="InterPro" id="IPR038494">
    <property type="entry name" value="IGPD_sf"/>
</dbReference>
<dbReference type="InterPro" id="IPR000807">
    <property type="entry name" value="ImidazoleglycerolP_deHydtase"/>
</dbReference>
<dbReference type="InterPro" id="IPR020565">
    <property type="entry name" value="ImidazoleglycerP_deHydtase_CS"/>
</dbReference>
<dbReference type="InterPro" id="IPR013954">
    <property type="entry name" value="PNK3P"/>
</dbReference>
<dbReference type="InterPro" id="IPR020568">
    <property type="entry name" value="Ribosomal_Su5_D2-typ_SF"/>
</dbReference>
<dbReference type="NCBIfam" id="TIGR01662">
    <property type="entry name" value="HAD-SF-IIIA"/>
    <property type="match status" value="1"/>
</dbReference>
<dbReference type="NCBIfam" id="TIGR01261">
    <property type="entry name" value="hisB_Nterm"/>
    <property type="match status" value="1"/>
</dbReference>
<dbReference type="NCBIfam" id="TIGR01656">
    <property type="entry name" value="Histidinol-ppas"/>
    <property type="match status" value="1"/>
</dbReference>
<dbReference type="NCBIfam" id="NF002111">
    <property type="entry name" value="PRK00951.2-1"/>
    <property type="match status" value="1"/>
</dbReference>
<dbReference type="NCBIfam" id="NF003937">
    <property type="entry name" value="PRK05446.1"/>
    <property type="match status" value="1"/>
</dbReference>
<dbReference type="PANTHER" id="PTHR23133:SF2">
    <property type="entry name" value="IMIDAZOLEGLYCEROL-PHOSPHATE DEHYDRATASE"/>
    <property type="match status" value="1"/>
</dbReference>
<dbReference type="PANTHER" id="PTHR23133">
    <property type="entry name" value="IMIDAZOLEGLYCEROL-PHOSPHATE DEHYDRATASE HIS7"/>
    <property type="match status" value="1"/>
</dbReference>
<dbReference type="Pfam" id="PF00475">
    <property type="entry name" value="IGPD"/>
    <property type="match status" value="1"/>
</dbReference>
<dbReference type="Pfam" id="PF08645">
    <property type="entry name" value="PNK3P"/>
    <property type="match status" value="1"/>
</dbReference>
<dbReference type="SUPFAM" id="SSF56784">
    <property type="entry name" value="HAD-like"/>
    <property type="match status" value="1"/>
</dbReference>
<dbReference type="SUPFAM" id="SSF54211">
    <property type="entry name" value="Ribosomal protein S5 domain 2-like"/>
    <property type="match status" value="2"/>
</dbReference>
<dbReference type="PROSITE" id="PS00954">
    <property type="entry name" value="IGP_DEHYDRATASE_1"/>
    <property type="match status" value="1"/>
</dbReference>
<dbReference type="PROSITE" id="PS00955">
    <property type="entry name" value="IGP_DEHYDRATASE_2"/>
    <property type="match status" value="1"/>
</dbReference>
<evidence type="ECO:0000255" key="1">
    <source>
        <dbReference type="HAMAP-Rule" id="MF_01022"/>
    </source>
</evidence>
<proteinExistence type="inferred from homology"/>
<feature type="chain" id="PRO_0000158204" description="Histidine biosynthesis bifunctional protein HisB">
    <location>
        <begin position="1"/>
        <end position="352"/>
    </location>
</feature>
<feature type="region of interest" description="Histidinol-phosphatase" evidence="1">
    <location>
        <begin position="1"/>
        <end position="164"/>
    </location>
</feature>
<feature type="region of interest" description="Imidazoleglycerol-phosphate dehydratase" evidence="1">
    <location>
        <begin position="165"/>
        <end position="352"/>
    </location>
</feature>
<feature type="active site" description="Nucleophile" evidence="1">
    <location>
        <position position="9"/>
    </location>
</feature>
<feature type="active site" description="Proton donor" evidence="1">
    <location>
        <position position="11"/>
    </location>
</feature>
<feature type="binding site" evidence="1">
    <location>
        <position position="9"/>
    </location>
    <ligand>
        <name>Mg(2+)</name>
        <dbReference type="ChEBI" id="CHEBI:18420"/>
    </ligand>
</feature>
<feature type="binding site" evidence="1">
    <location>
        <position position="11"/>
    </location>
    <ligand>
        <name>Mg(2+)</name>
        <dbReference type="ChEBI" id="CHEBI:18420"/>
    </ligand>
</feature>
<feature type="binding site" evidence="1">
    <location>
        <position position="93"/>
    </location>
    <ligand>
        <name>Zn(2+)</name>
        <dbReference type="ChEBI" id="CHEBI:29105"/>
    </ligand>
</feature>
<feature type="binding site" evidence="1">
    <location>
        <position position="95"/>
    </location>
    <ligand>
        <name>Zn(2+)</name>
        <dbReference type="ChEBI" id="CHEBI:29105"/>
    </ligand>
</feature>
<feature type="binding site" evidence="1">
    <location>
        <position position="101"/>
    </location>
    <ligand>
        <name>Zn(2+)</name>
        <dbReference type="ChEBI" id="CHEBI:29105"/>
    </ligand>
</feature>
<feature type="binding site" evidence="1">
    <location>
        <position position="103"/>
    </location>
    <ligand>
        <name>Zn(2+)</name>
        <dbReference type="ChEBI" id="CHEBI:29105"/>
    </ligand>
</feature>
<feature type="binding site" evidence="1">
    <location>
        <position position="130"/>
    </location>
    <ligand>
        <name>Mg(2+)</name>
        <dbReference type="ChEBI" id="CHEBI:18420"/>
    </ligand>
</feature>
<reference key="1">
    <citation type="journal article" date="2000" name="Nature">
        <title>The genome sequence of the food-borne pathogen Campylobacter jejuni reveals hypervariable sequences.</title>
        <authorList>
            <person name="Parkhill J."/>
            <person name="Wren B.W."/>
            <person name="Mungall K.L."/>
            <person name="Ketley J.M."/>
            <person name="Churcher C.M."/>
            <person name="Basham D."/>
            <person name="Chillingworth T."/>
            <person name="Davies R.M."/>
            <person name="Feltwell T."/>
            <person name="Holroyd S."/>
            <person name="Jagels K."/>
            <person name="Karlyshev A.V."/>
            <person name="Moule S."/>
            <person name="Pallen M.J."/>
            <person name="Penn C.W."/>
            <person name="Quail M.A."/>
            <person name="Rajandream M.A."/>
            <person name="Rutherford K.M."/>
            <person name="van Vliet A.H.M."/>
            <person name="Whitehead S."/>
            <person name="Barrell B.G."/>
        </authorList>
    </citation>
    <scope>NUCLEOTIDE SEQUENCE [LARGE SCALE GENOMIC DNA]</scope>
    <source>
        <strain>ATCC 700819 / NCTC 11168</strain>
    </source>
</reference>